<dbReference type="EC" id="2.3.2.6" evidence="1"/>
<dbReference type="EMBL" id="CP000302">
    <property type="protein sequence ID" value="ABE55121.1"/>
    <property type="molecule type" value="Genomic_DNA"/>
</dbReference>
<dbReference type="RefSeq" id="WP_011496278.1">
    <property type="nucleotide sequence ID" value="NC_007954.1"/>
</dbReference>
<dbReference type="SMR" id="Q12N55"/>
<dbReference type="STRING" id="318161.Sden_1837"/>
<dbReference type="KEGG" id="sdn:Sden_1837"/>
<dbReference type="eggNOG" id="COG2360">
    <property type="taxonomic scope" value="Bacteria"/>
</dbReference>
<dbReference type="HOGENOM" id="CLU_075045_0_0_6"/>
<dbReference type="OrthoDB" id="9790282at2"/>
<dbReference type="Proteomes" id="UP000001982">
    <property type="component" value="Chromosome"/>
</dbReference>
<dbReference type="GO" id="GO:0005737">
    <property type="term" value="C:cytoplasm"/>
    <property type="evidence" value="ECO:0007669"/>
    <property type="project" value="UniProtKB-SubCell"/>
</dbReference>
<dbReference type="GO" id="GO:0008914">
    <property type="term" value="F:leucyl-tRNA--protein transferase activity"/>
    <property type="evidence" value="ECO:0007669"/>
    <property type="project" value="UniProtKB-UniRule"/>
</dbReference>
<dbReference type="GO" id="GO:0030163">
    <property type="term" value="P:protein catabolic process"/>
    <property type="evidence" value="ECO:0007669"/>
    <property type="project" value="UniProtKB-UniRule"/>
</dbReference>
<dbReference type="FunFam" id="3.30.70.3550:FF:000001">
    <property type="entry name" value="Leucyl/phenylalanyl-tRNA--protein transferase"/>
    <property type="match status" value="1"/>
</dbReference>
<dbReference type="FunFam" id="3.40.630.70:FF:000001">
    <property type="entry name" value="Leucyl/phenylalanyl-tRNA--protein transferase"/>
    <property type="match status" value="1"/>
</dbReference>
<dbReference type="Gene3D" id="3.40.630.70">
    <property type="entry name" value="Leucyl/phenylalanyl-tRNA-protein transferase, C-terminal domain"/>
    <property type="match status" value="1"/>
</dbReference>
<dbReference type="Gene3D" id="3.30.70.3550">
    <property type="entry name" value="Leucyl/phenylalanyl-tRNA-protein transferase, N-terminal domain"/>
    <property type="match status" value="1"/>
</dbReference>
<dbReference type="HAMAP" id="MF_00688">
    <property type="entry name" value="Leu_Phe_trans"/>
    <property type="match status" value="1"/>
</dbReference>
<dbReference type="InterPro" id="IPR016181">
    <property type="entry name" value="Acyl_CoA_acyltransferase"/>
</dbReference>
<dbReference type="InterPro" id="IPR004616">
    <property type="entry name" value="Leu/Phe-tRNA_Trfase"/>
</dbReference>
<dbReference type="InterPro" id="IPR042203">
    <property type="entry name" value="Leu/Phe-tRNA_Trfase_C"/>
</dbReference>
<dbReference type="InterPro" id="IPR042221">
    <property type="entry name" value="Leu/Phe-tRNA_Trfase_N"/>
</dbReference>
<dbReference type="NCBIfam" id="TIGR00667">
    <property type="entry name" value="aat"/>
    <property type="match status" value="1"/>
</dbReference>
<dbReference type="PANTHER" id="PTHR30098">
    <property type="entry name" value="LEUCYL/PHENYLALANYL-TRNA--PROTEIN TRANSFERASE"/>
    <property type="match status" value="1"/>
</dbReference>
<dbReference type="PANTHER" id="PTHR30098:SF2">
    <property type="entry name" value="LEUCYL_PHENYLALANYL-TRNA--PROTEIN TRANSFERASE"/>
    <property type="match status" value="1"/>
</dbReference>
<dbReference type="Pfam" id="PF03588">
    <property type="entry name" value="Leu_Phe_trans"/>
    <property type="match status" value="1"/>
</dbReference>
<dbReference type="SUPFAM" id="SSF55729">
    <property type="entry name" value="Acyl-CoA N-acyltransferases (Nat)"/>
    <property type="match status" value="1"/>
</dbReference>
<sequence>MKSLCYLNQEDCFPAAHKALTDPNGLIAIGGDLQPERLLSAYQQGIFPWFNQGEPILWWTPDPRAVFQLSDYRPSRSLMKTLKRQTWRFTINKAFDAVIHQCAALRQEGTWITPAIKAAYGQLHAQGDAHSIEVWQGEQLVGGLYGIAVGKIFCGESMFHLETDASKAAFHLLVTHLRRFEFTLIDAQVMNPHLARLGAKPLPREAFLTQLAQLKHQHSPATAWQPQEVKLGY</sequence>
<reference key="1">
    <citation type="submission" date="2006-03" db="EMBL/GenBank/DDBJ databases">
        <title>Complete sequence of Shewanella denitrificans OS217.</title>
        <authorList>
            <consortium name="US DOE Joint Genome Institute"/>
            <person name="Copeland A."/>
            <person name="Lucas S."/>
            <person name="Lapidus A."/>
            <person name="Barry K."/>
            <person name="Detter J.C."/>
            <person name="Glavina del Rio T."/>
            <person name="Hammon N."/>
            <person name="Israni S."/>
            <person name="Dalin E."/>
            <person name="Tice H."/>
            <person name="Pitluck S."/>
            <person name="Brettin T."/>
            <person name="Bruce D."/>
            <person name="Han C."/>
            <person name="Tapia R."/>
            <person name="Gilna P."/>
            <person name="Kiss H."/>
            <person name="Schmutz J."/>
            <person name="Larimer F."/>
            <person name="Land M."/>
            <person name="Hauser L."/>
            <person name="Kyrpides N."/>
            <person name="Lykidis A."/>
            <person name="Richardson P."/>
        </authorList>
    </citation>
    <scope>NUCLEOTIDE SEQUENCE [LARGE SCALE GENOMIC DNA]</scope>
    <source>
        <strain>OS217 / ATCC BAA-1090 / DSM 15013</strain>
    </source>
</reference>
<protein>
    <recommendedName>
        <fullName evidence="1">Leucyl/phenylalanyl-tRNA--protein transferase</fullName>
        <ecNumber evidence="1">2.3.2.6</ecNumber>
    </recommendedName>
    <alternativeName>
        <fullName evidence="1">L/F-transferase</fullName>
    </alternativeName>
    <alternativeName>
        <fullName evidence="1">Leucyltransferase</fullName>
    </alternativeName>
    <alternativeName>
        <fullName evidence="1">Phenyalanyltransferase</fullName>
    </alternativeName>
</protein>
<feature type="chain" id="PRO_0000304356" description="Leucyl/phenylalanyl-tRNA--protein transferase">
    <location>
        <begin position="1"/>
        <end position="233"/>
    </location>
</feature>
<comment type="function">
    <text evidence="1">Functions in the N-end rule pathway of protein degradation where it conjugates Leu, Phe and, less efficiently, Met from aminoacyl-tRNAs to the N-termini of proteins containing an N-terminal arginine or lysine.</text>
</comment>
<comment type="catalytic activity">
    <reaction evidence="1">
        <text>N-terminal L-lysyl-[protein] + L-leucyl-tRNA(Leu) = N-terminal L-leucyl-L-lysyl-[protein] + tRNA(Leu) + H(+)</text>
        <dbReference type="Rhea" id="RHEA:12340"/>
        <dbReference type="Rhea" id="RHEA-COMP:9613"/>
        <dbReference type="Rhea" id="RHEA-COMP:9622"/>
        <dbReference type="Rhea" id="RHEA-COMP:12670"/>
        <dbReference type="Rhea" id="RHEA-COMP:12671"/>
        <dbReference type="ChEBI" id="CHEBI:15378"/>
        <dbReference type="ChEBI" id="CHEBI:65249"/>
        <dbReference type="ChEBI" id="CHEBI:78442"/>
        <dbReference type="ChEBI" id="CHEBI:78494"/>
        <dbReference type="ChEBI" id="CHEBI:133043"/>
        <dbReference type="EC" id="2.3.2.6"/>
    </reaction>
</comment>
<comment type="catalytic activity">
    <reaction evidence="1">
        <text>N-terminal L-arginyl-[protein] + L-leucyl-tRNA(Leu) = N-terminal L-leucyl-L-arginyl-[protein] + tRNA(Leu) + H(+)</text>
        <dbReference type="Rhea" id="RHEA:50416"/>
        <dbReference type="Rhea" id="RHEA-COMP:9613"/>
        <dbReference type="Rhea" id="RHEA-COMP:9622"/>
        <dbReference type="Rhea" id="RHEA-COMP:12672"/>
        <dbReference type="Rhea" id="RHEA-COMP:12673"/>
        <dbReference type="ChEBI" id="CHEBI:15378"/>
        <dbReference type="ChEBI" id="CHEBI:64719"/>
        <dbReference type="ChEBI" id="CHEBI:78442"/>
        <dbReference type="ChEBI" id="CHEBI:78494"/>
        <dbReference type="ChEBI" id="CHEBI:133044"/>
        <dbReference type="EC" id="2.3.2.6"/>
    </reaction>
</comment>
<comment type="catalytic activity">
    <reaction evidence="1">
        <text>L-phenylalanyl-tRNA(Phe) + an N-terminal L-alpha-aminoacyl-[protein] = an N-terminal L-phenylalanyl-L-alpha-aminoacyl-[protein] + tRNA(Phe)</text>
        <dbReference type="Rhea" id="RHEA:43632"/>
        <dbReference type="Rhea" id="RHEA-COMP:9668"/>
        <dbReference type="Rhea" id="RHEA-COMP:9699"/>
        <dbReference type="Rhea" id="RHEA-COMP:10636"/>
        <dbReference type="Rhea" id="RHEA-COMP:10637"/>
        <dbReference type="ChEBI" id="CHEBI:78442"/>
        <dbReference type="ChEBI" id="CHEBI:78531"/>
        <dbReference type="ChEBI" id="CHEBI:78597"/>
        <dbReference type="ChEBI" id="CHEBI:83561"/>
        <dbReference type="EC" id="2.3.2.6"/>
    </reaction>
</comment>
<comment type="subcellular location">
    <subcellularLocation>
        <location evidence="1">Cytoplasm</location>
    </subcellularLocation>
</comment>
<comment type="similarity">
    <text evidence="1">Belongs to the L/F-transferase family.</text>
</comment>
<keyword id="KW-0012">Acyltransferase</keyword>
<keyword id="KW-0963">Cytoplasm</keyword>
<keyword id="KW-1185">Reference proteome</keyword>
<keyword id="KW-0808">Transferase</keyword>
<accession>Q12N55</accession>
<name>LFTR_SHEDO</name>
<proteinExistence type="inferred from homology"/>
<gene>
    <name evidence="1" type="primary">aat</name>
    <name type="ordered locus">Sden_1837</name>
</gene>
<evidence type="ECO:0000255" key="1">
    <source>
        <dbReference type="HAMAP-Rule" id="MF_00688"/>
    </source>
</evidence>
<organism>
    <name type="scientific">Shewanella denitrificans (strain OS217 / ATCC BAA-1090 / DSM 15013)</name>
    <dbReference type="NCBI Taxonomy" id="318161"/>
    <lineage>
        <taxon>Bacteria</taxon>
        <taxon>Pseudomonadati</taxon>
        <taxon>Pseudomonadota</taxon>
        <taxon>Gammaproteobacteria</taxon>
        <taxon>Alteromonadales</taxon>
        <taxon>Shewanellaceae</taxon>
        <taxon>Shewanella</taxon>
    </lineage>
</organism>